<accession>P0CX39</accession>
<accession>A2TBM0</accession>
<accession>A2TBP0</accession>
<accession>D3DM09</accession>
<accession>P05754</accession>
<accession>P22801</accession>
<dbReference type="EMBL" id="Z26879">
    <property type="protein sequence ID" value="CAA81525.1"/>
    <property type="molecule type" value="Genomic_DNA"/>
</dbReference>
<dbReference type="EMBL" id="Z35833">
    <property type="protein sequence ID" value="CAA84893.1"/>
    <property type="molecule type" value="Genomic_DNA"/>
</dbReference>
<dbReference type="EMBL" id="EF123123">
    <property type="protein sequence ID" value="ABM97467.1"/>
    <property type="molecule type" value="mRNA"/>
</dbReference>
<dbReference type="EMBL" id="BK006936">
    <property type="protein sequence ID" value="DAA07049.1"/>
    <property type="molecule type" value="Genomic_DNA"/>
</dbReference>
<dbReference type="PIR" id="S45591">
    <property type="entry name" value="S45591"/>
</dbReference>
<dbReference type="RefSeq" id="NP_009481.1">
    <property type="nucleotide sequence ID" value="NM_001178312.1"/>
</dbReference>
<dbReference type="PDB" id="3J6X">
    <property type="method" value="EM"/>
    <property type="resolution" value="6.10 A"/>
    <property type="chains" value="S8=1-200"/>
</dbReference>
<dbReference type="PDB" id="3J6Y">
    <property type="method" value="EM"/>
    <property type="resolution" value="6.10 A"/>
    <property type="chains" value="S8=1-200"/>
</dbReference>
<dbReference type="PDB" id="3J77">
    <property type="method" value="EM"/>
    <property type="resolution" value="6.20 A"/>
    <property type="chains" value="S8=1-200"/>
</dbReference>
<dbReference type="PDB" id="3J78">
    <property type="method" value="EM"/>
    <property type="resolution" value="6.30 A"/>
    <property type="chains" value="S8=1-200"/>
</dbReference>
<dbReference type="PDB" id="4U3M">
    <property type="method" value="X-ray"/>
    <property type="resolution" value="3.00 A"/>
    <property type="chains" value="S8/s8=1-200"/>
</dbReference>
<dbReference type="PDB" id="4U3N">
    <property type="method" value="X-ray"/>
    <property type="resolution" value="3.20 A"/>
    <property type="chains" value="S8/s8=1-200"/>
</dbReference>
<dbReference type="PDB" id="4U3U">
    <property type="method" value="X-ray"/>
    <property type="resolution" value="2.90 A"/>
    <property type="chains" value="S8/s8=1-200"/>
</dbReference>
<dbReference type="PDB" id="4U4N">
    <property type="method" value="X-ray"/>
    <property type="resolution" value="3.10 A"/>
    <property type="chains" value="S8/s8=1-200"/>
</dbReference>
<dbReference type="PDB" id="4U4O">
    <property type="method" value="X-ray"/>
    <property type="resolution" value="3.60 A"/>
    <property type="chains" value="S8/s8=1-200"/>
</dbReference>
<dbReference type="PDB" id="4U4Q">
    <property type="method" value="X-ray"/>
    <property type="resolution" value="3.00 A"/>
    <property type="chains" value="S8/s8=1-200"/>
</dbReference>
<dbReference type="PDB" id="4U4R">
    <property type="method" value="X-ray"/>
    <property type="resolution" value="2.80 A"/>
    <property type="chains" value="S8/s8=1-200"/>
</dbReference>
<dbReference type="PDB" id="4U4U">
    <property type="method" value="X-ray"/>
    <property type="resolution" value="3.00 A"/>
    <property type="chains" value="S8/s8=1-200"/>
</dbReference>
<dbReference type="PDB" id="4U4Y">
    <property type="method" value="X-ray"/>
    <property type="resolution" value="3.20 A"/>
    <property type="chains" value="S8/s8=1-200"/>
</dbReference>
<dbReference type="PDB" id="4U4Z">
    <property type="method" value="X-ray"/>
    <property type="resolution" value="3.10 A"/>
    <property type="chains" value="S8/s8=1-200"/>
</dbReference>
<dbReference type="PDB" id="4U50">
    <property type="method" value="X-ray"/>
    <property type="resolution" value="3.20 A"/>
    <property type="chains" value="S8/s8=1-200"/>
</dbReference>
<dbReference type="PDB" id="4U51">
    <property type="method" value="X-ray"/>
    <property type="resolution" value="3.20 A"/>
    <property type="chains" value="S8/s8=1-200"/>
</dbReference>
<dbReference type="PDB" id="4U52">
    <property type="method" value="X-ray"/>
    <property type="resolution" value="3.00 A"/>
    <property type="chains" value="S8/s8=1-200"/>
</dbReference>
<dbReference type="PDB" id="4U53">
    <property type="method" value="X-ray"/>
    <property type="resolution" value="3.30 A"/>
    <property type="chains" value="S8/s8=1-200"/>
</dbReference>
<dbReference type="PDB" id="4U55">
    <property type="method" value="X-ray"/>
    <property type="resolution" value="3.20 A"/>
    <property type="chains" value="S8/s8=1-200"/>
</dbReference>
<dbReference type="PDB" id="4U56">
    <property type="method" value="X-ray"/>
    <property type="resolution" value="3.45 A"/>
    <property type="chains" value="S8/s8=1-200"/>
</dbReference>
<dbReference type="PDB" id="4U6F">
    <property type="method" value="X-ray"/>
    <property type="resolution" value="3.10 A"/>
    <property type="chains" value="S8/s8=1-200"/>
</dbReference>
<dbReference type="PDB" id="4V88">
    <property type="method" value="X-ray"/>
    <property type="resolution" value="3.00 A"/>
    <property type="chains" value="AI/CI=1-200"/>
</dbReference>
<dbReference type="PDB" id="4V8Y">
    <property type="method" value="EM"/>
    <property type="resolution" value="4.30 A"/>
    <property type="chains" value="AI=1-200"/>
</dbReference>
<dbReference type="PDB" id="4V8Z">
    <property type="method" value="EM"/>
    <property type="resolution" value="6.60 A"/>
    <property type="chains" value="AI=1-200"/>
</dbReference>
<dbReference type="PDB" id="4V92">
    <property type="method" value="EM"/>
    <property type="resolution" value="3.70 A"/>
    <property type="chains" value="I=2-199"/>
</dbReference>
<dbReference type="PDB" id="5DAT">
    <property type="method" value="X-ray"/>
    <property type="resolution" value="3.15 A"/>
    <property type="chains" value="S8/s8=1-200"/>
</dbReference>
<dbReference type="PDB" id="5DC3">
    <property type="method" value="X-ray"/>
    <property type="resolution" value="3.25 A"/>
    <property type="chains" value="S8/s8=1-200"/>
</dbReference>
<dbReference type="PDB" id="5DGE">
    <property type="method" value="X-ray"/>
    <property type="resolution" value="3.45 A"/>
    <property type="chains" value="S8/s8=1-200"/>
</dbReference>
<dbReference type="PDB" id="5DGF">
    <property type="method" value="X-ray"/>
    <property type="resolution" value="3.30 A"/>
    <property type="chains" value="S8/s8=1-200"/>
</dbReference>
<dbReference type="PDB" id="5DGV">
    <property type="method" value="X-ray"/>
    <property type="resolution" value="3.10 A"/>
    <property type="chains" value="S8/s8=1-200"/>
</dbReference>
<dbReference type="PDB" id="5FCI">
    <property type="method" value="X-ray"/>
    <property type="resolution" value="3.40 A"/>
    <property type="chains" value="S8/s8=1-200"/>
</dbReference>
<dbReference type="PDB" id="5FCJ">
    <property type="method" value="X-ray"/>
    <property type="resolution" value="3.10 A"/>
    <property type="chains" value="S8/s8=1-200"/>
</dbReference>
<dbReference type="PDB" id="5I4L">
    <property type="method" value="X-ray"/>
    <property type="resolution" value="3.10 A"/>
    <property type="chains" value="S8/s8=1-200"/>
</dbReference>
<dbReference type="PDB" id="5JUO">
    <property type="method" value="EM"/>
    <property type="resolution" value="4.00 A"/>
    <property type="chains" value="FB=1-200"/>
</dbReference>
<dbReference type="PDB" id="5JUP">
    <property type="method" value="EM"/>
    <property type="resolution" value="3.50 A"/>
    <property type="chains" value="FB=1-200"/>
</dbReference>
<dbReference type="PDB" id="5JUS">
    <property type="method" value="EM"/>
    <property type="resolution" value="4.20 A"/>
    <property type="chains" value="FB=1-200"/>
</dbReference>
<dbReference type="PDB" id="5JUT">
    <property type="method" value="EM"/>
    <property type="resolution" value="4.00 A"/>
    <property type="chains" value="FB=1-200"/>
</dbReference>
<dbReference type="PDB" id="5JUU">
    <property type="method" value="EM"/>
    <property type="resolution" value="4.00 A"/>
    <property type="chains" value="FB=1-200"/>
</dbReference>
<dbReference type="PDB" id="5LL6">
    <property type="method" value="EM"/>
    <property type="resolution" value="3.90 A"/>
    <property type="chains" value="V=1-200"/>
</dbReference>
<dbReference type="PDB" id="5LYB">
    <property type="method" value="X-ray"/>
    <property type="resolution" value="3.25 A"/>
    <property type="chains" value="S8/s8=2-200"/>
</dbReference>
<dbReference type="PDB" id="5M1J">
    <property type="method" value="EM"/>
    <property type="resolution" value="3.30 A"/>
    <property type="chains" value="I2=2-200"/>
</dbReference>
<dbReference type="PDB" id="5MC6">
    <property type="method" value="EM"/>
    <property type="resolution" value="3.80 A"/>
    <property type="chains" value="V=1-200"/>
</dbReference>
<dbReference type="PDB" id="5MEI">
    <property type="method" value="X-ray"/>
    <property type="resolution" value="3.50 A"/>
    <property type="chains" value="J/s8=2-200"/>
</dbReference>
<dbReference type="PDB" id="5NDG">
    <property type="method" value="X-ray"/>
    <property type="resolution" value="3.70 A"/>
    <property type="chains" value="S8/s8=1-200"/>
</dbReference>
<dbReference type="PDB" id="5NDV">
    <property type="method" value="X-ray"/>
    <property type="resolution" value="3.30 A"/>
    <property type="chains" value="S8/s8=1-200"/>
</dbReference>
<dbReference type="PDB" id="5NDW">
    <property type="method" value="X-ray"/>
    <property type="resolution" value="3.70 A"/>
    <property type="chains" value="S8/s8=1-200"/>
</dbReference>
<dbReference type="PDB" id="5OBM">
    <property type="method" value="X-ray"/>
    <property type="resolution" value="3.40 A"/>
    <property type="chains" value="S8/s8=1-200"/>
</dbReference>
<dbReference type="PDB" id="5ON6">
    <property type="method" value="X-ray"/>
    <property type="resolution" value="3.10 A"/>
    <property type="chains" value="J/s8=2-200"/>
</dbReference>
<dbReference type="PDB" id="5TBW">
    <property type="method" value="X-ray"/>
    <property type="resolution" value="3.00 A"/>
    <property type="chains" value="J/s8=2-200"/>
</dbReference>
<dbReference type="PDB" id="5TGA">
    <property type="method" value="X-ray"/>
    <property type="resolution" value="3.30 A"/>
    <property type="chains" value="S8/s8=2-200"/>
</dbReference>
<dbReference type="PDB" id="5TGM">
    <property type="method" value="X-ray"/>
    <property type="resolution" value="3.50 A"/>
    <property type="chains" value="S8/s8=2-200"/>
</dbReference>
<dbReference type="PDB" id="5TZS">
    <property type="method" value="EM"/>
    <property type="resolution" value="5.10 A"/>
    <property type="chains" value="8=1-200"/>
</dbReference>
<dbReference type="PDB" id="5WLC">
    <property type="method" value="EM"/>
    <property type="resolution" value="3.80 A"/>
    <property type="chains" value="L8=1-200"/>
</dbReference>
<dbReference type="PDB" id="5WYJ">
    <property type="method" value="EM"/>
    <property type="resolution" value="8.70 A"/>
    <property type="chains" value="SJ=1-200"/>
</dbReference>
<dbReference type="PDB" id="5WYK">
    <property type="method" value="EM"/>
    <property type="resolution" value="4.50 A"/>
    <property type="chains" value="SJ=1-200"/>
</dbReference>
<dbReference type="PDB" id="6EML">
    <property type="method" value="EM"/>
    <property type="resolution" value="3.60 A"/>
    <property type="chains" value="V=1-200"/>
</dbReference>
<dbReference type="PDB" id="6FAI">
    <property type="method" value="EM"/>
    <property type="resolution" value="3.40 A"/>
    <property type="chains" value="I=1-200"/>
</dbReference>
<dbReference type="PDB" id="6GQ1">
    <property type="method" value="EM"/>
    <property type="resolution" value="4.40 A"/>
    <property type="chains" value="y=2-200"/>
</dbReference>
<dbReference type="PDB" id="6GQB">
    <property type="method" value="EM"/>
    <property type="resolution" value="3.90 A"/>
    <property type="chains" value="y=2-200"/>
</dbReference>
<dbReference type="PDB" id="6GQV">
    <property type="method" value="EM"/>
    <property type="resolution" value="4.00 A"/>
    <property type="chains" value="y=2-200"/>
</dbReference>
<dbReference type="PDB" id="6HHQ">
    <property type="method" value="X-ray"/>
    <property type="resolution" value="3.10 A"/>
    <property type="chains" value="J/s8=1-200"/>
</dbReference>
<dbReference type="PDB" id="6I7O">
    <property type="method" value="EM"/>
    <property type="resolution" value="5.30 A"/>
    <property type="chains" value="V/Vb=1-200"/>
</dbReference>
<dbReference type="PDB" id="6KE6">
    <property type="method" value="EM"/>
    <property type="resolution" value="3.40 A"/>
    <property type="chains" value="SJ=1-200"/>
</dbReference>
<dbReference type="PDB" id="6LQP">
    <property type="method" value="EM"/>
    <property type="resolution" value="3.20 A"/>
    <property type="chains" value="SJ=1-200"/>
</dbReference>
<dbReference type="PDB" id="6LQQ">
    <property type="method" value="EM"/>
    <property type="resolution" value="4.10 A"/>
    <property type="chains" value="SJ=1-200"/>
</dbReference>
<dbReference type="PDB" id="6LQR">
    <property type="method" value="EM"/>
    <property type="resolution" value="8.60 A"/>
    <property type="chains" value="SJ=1-200"/>
</dbReference>
<dbReference type="PDB" id="6LQS">
    <property type="method" value="EM"/>
    <property type="resolution" value="3.80 A"/>
    <property type="chains" value="SJ=1-200"/>
</dbReference>
<dbReference type="PDB" id="6LQT">
    <property type="method" value="EM"/>
    <property type="resolution" value="4.90 A"/>
    <property type="chains" value="SJ=1-200"/>
</dbReference>
<dbReference type="PDB" id="6LQU">
    <property type="method" value="EM"/>
    <property type="resolution" value="3.70 A"/>
    <property type="chains" value="SJ=1-200"/>
</dbReference>
<dbReference type="PDB" id="6LQV">
    <property type="method" value="EM"/>
    <property type="resolution" value="4.80 A"/>
    <property type="chains" value="SJ=1-200"/>
</dbReference>
<dbReference type="PDB" id="6Q8Y">
    <property type="method" value="EM"/>
    <property type="resolution" value="3.10 A"/>
    <property type="chains" value="V=2-200"/>
</dbReference>
<dbReference type="PDB" id="6RBD">
    <property type="method" value="EM"/>
    <property type="resolution" value="3.47 A"/>
    <property type="chains" value="I=1-200"/>
</dbReference>
<dbReference type="PDB" id="6RBE">
    <property type="method" value="EM"/>
    <property type="resolution" value="3.80 A"/>
    <property type="chains" value="I=1-200"/>
</dbReference>
<dbReference type="PDB" id="6S47">
    <property type="method" value="EM"/>
    <property type="resolution" value="3.28 A"/>
    <property type="chains" value="BJ=2-200"/>
</dbReference>
<dbReference type="PDB" id="6SNT">
    <property type="method" value="EM"/>
    <property type="resolution" value="2.80 A"/>
    <property type="chains" value="I=1-200"/>
</dbReference>
<dbReference type="PDB" id="6SV4">
    <property type="method" value="EM"/>
    <property type="resolution" value="3.30 A"/>
    <property type="chains" value="V/Vb/Vc=1-200"/>
</dbReference>
<dbReference type="PDB" id="6T4Q">
    <property type="method" value="EM"/>
    <property type="resolution" value="2.60 A"/>
    <property type="chains" value="SI=2-199"/>
</dbReference>
<dbReference type="PDB" id="6T7I">
    <property type="method" value="EM"/>
    <property type="resolution" value="3.20 A"/>
    <property type="chains" value="SI=1-200"/>
</dbReference>
<dbReference type="PDB" id="6T7T">
    <property type="method" value="EM"/>
    <property type="resolution" value="3.10 A"/>
    <property type="chains" value="SI=1-200"/>
</dbReference>
<dbReference type="PDB" id="6T83">
    <property type="method" value="EM"/>
    <property type="resolution" value="4.00 A"/>
    <property type="chains" value="Ib/j=1-200"/>
</dbReference>
<dbReference type="PDB" id="6TNU">
    <property type="method" value="EM"/>
    <property type="resolution" value="3.10 A"/>
    <property type="chains" value="V=2-199"/>
</dbReference>
<dbReference type="PDB" id="6WDR">
    <property type="method" value="EM"/>
    <property type="resolution" value="3.70 A"/>
    <property type="chains" value="I=2-200"/>
</dbReference>
<dbReference type="PDB" id="6WOO">
    <property type="method" value="EM"/>
    <property type="resolution" value="2.90 A"/>
    <property type="chains" value="II=2-200"/>
</dbReference>
<dbReference type="PDB" id="6Y7C">
    <property type="method" value="EM"/>
    <property type="resolution" value="3.80 A"/>
    <property type="chains" value="I=1-200"/>
</dbReference>
<dbReference type="PDB" id="6Z6J">
    <property type="method" value="EM"/>
    <property type="resolution" value="3.40 A"/>
    <property type="chains" value="SI=1-200"/>
</dbReference>
<dbReference type="PDB" id="6Z6K">
    <property type="method" value="EM"/>
    <property type="resolution" value="3.40 A"/>
    <property type="chains" value="SI=1-200"/>
</dbReference>
<dbReference type="PDB" id="6ZCE">
    <property type="method" value="EM"/>
    <property type="resolution" value="5.30 A"/>
    <property type="chains" value="J=1-200"/>
</dbReference>
<dbReference type="PDB" id="6ZQB">
    <property type="method" value="EM"/>
    <property type="resolution" value="3.90 A"/>
    <property type="chains" value="DI=1-200"/>
</dbReference>
<dbReference type="PDB" id="6ZQC">
    <property type="method" value="EM"/>
    <property type="resolution" value="3.80 A"/>
    <property type="chains" value="DI=1-200"/>
</dbReference>
<dbReference type="PDB" id="6ZQD">
    <property type="method" value="EM"/>
    <property type="resolution" value="3.80 A"/>
    <property type="chains" value="DI=1-200"/>
</dbReference>
<dbReference type="PDB" id="6ZQE">
    <property type="method" value="EM"/>
    <property type="resolution" value="7.10 A"/>
    <property type="chains" value="DI=1-200"/>
</dbReference>
<dbReference type="PDB" id="6ZQF">
    <property type="method" value="EM"/>
    <property type="resolution" value="4.90 A"/>
    <property type="chains" value="DI=1-200"/>
</dbReference>
<dbReference type="PDB" id="6ZQG">
    <property type="method" value="EM"/>
    <property type="resolution" value="3.50 A"/>
    <property type="chains" value="DI=1-200"/>
</dbReference>
<dbReference type="PDB" id="6ZU9">
    <property type="method" value="EM"/>
    <property type="resolution" value="6.20 A"/>
    <property type="chains" value="V=1-200"/>
</dbReference>
<dbReference type="PDB" id="6ZVI">
    <property type="method" value="EM"/>
    <property type="resolution" value="3.00 A"/>
    <property type="chains" value="q=2-200"/>
</dbReference>
<dbReference type="PDB" id="7A1G">
    <property type="method" value="EM"/>
    <property type="resolution" value="3.00 A"/>
    <property type="chains" value="V=1-200"/>
</dbReference>
<dbReference type="PDB" id="7AJT">
    <property type="method" value="EM"/>
    <property type="resolution" value="4.60 A"/>
    <property type="chains" value="DI=1-200"/>
</dbReference>
<dbReference type="PDB" id="7AJU">
    <property type="method" value="EM"/>
    <property type="resolution" value="3.80 A"/>
    <property type="chains" value="DI=1-200"/>
</dbReference>
<dbReference type="PDB" id="7B7D">
    <property type="method" value="EM"/>
    <property type="resolution" value="3.30 A"/>
    <property type="chains" value="V=2-199"/>
</dbReference>
<dbReference type="PDB" id="7D4I">
    <property type="method" value="EM"/>
    <property type="resolution" value="4.00 A"/>
    <property type="chains" value="SJ=1-200"/>
</dbReference>
<dbReference type="PDB" id="7D5T">
    <property type="method" value="EM"/>
    <property type="resolution" value="6.00 A"/>
    <property type="chains" value="SJ=1-200"/>
</dbReference>
<dbReference type="PDB" id="7D63">
    <property type="method" value="EM"/>
    <property type="resolution" value="12.30 A"/>
    <property type="chains" value="SJ=1-200"/>
</dbReference>
<dbReference type="PDB" id="7MPI">
    <property type="method" value="EM"/>
    <property type="resolution" value="3.05 A"/>
    <property type="chains" value="BI=2-200"/>
</dbReference>
<dbReference type="PDB" id="7MPJ">
    <property type="method" value="EM"/>
    <property type="resolution" value="2.70 A"/>
    <property type="chains" value="BI=2-200"/>
</dbReference>
<dbReference type="PDB" id="7N8B">
    <property type="method" value="EM"/>
    <property type="resolution" value="3.05 A"/>
    <property type="chains" value="BI=2-200"/>
</dbReference>
<dbReference type="PDB" id="7NRC">
    <property type="method" value="EM"/>
    <property type="resolution" value="3.90 A"/>
    <property type="chains" value="SV=2-199"/>
</dbReference>
<dbReference type="PDB" id="7NRD">
    <property type="method" value="EM"/>
    <property type="resolution" value="4.36 A"/>
    <property type="chains" value="SV=2-200"/>
</dbReference>
<dbReference type="PDB" id="7SUK">
    <property type="method" value="EM"/>
    <property type="resolution" value="3.99 A"/>
    <property type="chains" value="L8=1-200"/>
</dbReference>
<dbReference type="PDB" id="7WTL">
    <property type="method" value="EM"/>
    <property type="resolution" value="3.30 A"/>
    <property type="chains" value="SI=1-200"/>
</dbReference>
<dbReference type="PDB" id="7WTM">
    <property type="method" value="EM"/>
    <property type="resolution" value="3.50 A"/>
    <property type="chains" value="SI=1-200"/>
</dbReference>
<dbReference type="PDB" id="7WTN">
    <property type="method" value="EM"/>
    <property type="resolution" value="3.40 A"/>
    <property type="chains" value="SI=1-200"/>
</dbReference>
<dbReference type="PDB" id="7WTO">
    <property type="method" value="EM"/>
    <property type="resolution" value="3.50 A"/>
    <property type="chains" value="SI=1-200"/>
</dbReference>
<dbReference type="PDB" id="7WTP">
    <property type="method" value="EM"/>
    <property type="resolution" value="3.80 A"/>
    <property type="chains" value="SI=1-200"/>
</dbReference>
<dbReference type="PDB" id="7WTQ">
    <property type="method" value="EM"/>
    <property type="resolution" value="3.70 A"/>
    <property type="chains" value="SI=1-200"/>
</dbReference>
<dbReference type="PDB" id="7WTR">
    <property type="method" value="EM"/>
    <property type="resolution" value="3.50 A"/>
    <property type="chains" value="SI=1-200"/>
</dbReference>
<dbReference type="PDB" id="7ZPQ">
    <property type="method" value="EM"/>
    <property type="resolution" value="3.47 A"/>
    <property type="chains" value="AI=1-200"/>
</dbReference>
<dbReference type="PDB" id="7ZRS">
    <property type="method" value="EM"/>
    <property type="resolution" value="4.80 A"/>
    <property type="chains" value="AI=1-200"/>
</dbReference>
<dbReference type="PDB" id="7ZW0">
    <property type="method" value="EM"/>
    <property type="resolution" value="2.40 A"/>
    <property type="chains" value="sV=1-200"/>
</dbReference>
<dbReference type="PDB" id="8BN3">
    <property type="method" value="EM"/>
    <property type="resolution" value="2.40 A"/>
    <property type="chains" value="S8=2-200"/>
</dbReference>
<dbReference type="PDB" id="8BQX">
    <property type="method" value="EM"/>
    <property type="resolution" value="3.80 A"/>
    <property type="chains" value="V=2-199"/>
</dbReference>
<dbReference type="PDB" id="8C00">
    <property type="method" value="EM"/>
    <property type="resolution" value="2.90 A"/>
    <property type="chains" value="V=1-200"/>
</dbReference>
<dbReference type="PDB" id="8C01">
    <property type="method" value="EM"/>
    <property type="resolution" value="2.70 A"/>
    <property type="chains" value="V=1-200"/>
</dbReference>
<dbReference type="PDB" id="8CAH">
    <property type="method" value="EM"/>
    <property type="resolution" value="3.00 A"/>
    <property type="chains" value="V=1-200"/>
</dbReference>
<dbReference type="PDB" id="8CAS">
    <property type="method" value="EM"/>
    <property type="resolution" value="3.30 A"/>
    <property type="chains" value="V=1-200"/>
</dbReference>
<dbReference type="PDB" id="8CBJ">
    <property type="method" value="EM"/>
    <property type="resolution" value="3.80 A"/>
    <property type="chains" value="I=1-200"/>
</dbReference>
<dbReference type="PDB" id="8CKU">
    <property type="method" value="EM"/>
    <property type="resolution" value="3.11 A"/>
    <property type="chains" value="l=1-200"/>
</dbReference>
<dbReference type="PDB" id="8EUB">
    <property type="method" value="EM"/>
    <property type="resolution" value="2.52 A"/>
    <property type="chains" value="BI=1-200"/>
</dbReference>
<dbReference type="PDB" id="8EVP">
    <property type="method" value="EM"/>
    <property type="resolution" value="2.38 A"/>
    <property type="chains" value="BI=1-200"/>
</dbReference>
<dbReference type="PDB" id="8EVQ">
    <property type="method" value="EM"/>
    <property type="resolution" value="2.72 A"/>
    <property type="chains" value="BI=1-200"/>
</dbReference>
<dbReference type="PDB" id="8EVR">
    <property type="method" value="EM"/>
    <property type="resolution" value="2.87 A"/>
    <property type="chains" value="BI=1-200"/>
</dbReference>
<dbReference type="PDB" id="8EVS">
    <property type="method" value="EM"/>
    <property type="resolution" value="2.62 A"/>
    <property type="chains" value="BI=1-200"/>
</dbReference>
<dbReference type="PDB" id="8EVT">
    <property type="method" value="EM"/>
    <property type="resolution" value="2.20 A"/>
    <property type="chains" value="BI=1-200"/>
</dbReference>
<dbReference type="PDB" id="8EWB">
    <property type="method" value="EM"/>
    <property type="resolution" value="2.87 A"/>
    <property type="chains" value="BI=1-200"/>
</dbReference>
<dbReference type="PDB" id="8EWC">
    <property type="method" value="EM"/>
    <property type="resolution" value="2.45 A"/>
    <property type="chains" value="BI=1-200"/>
</dbReference>
<dbReference type="PDB" id="8K2D">
    <property type="method" value="EM"/>
    <property type="resolution" value="3.20 A"/>
    <property type="chains" value="SI=1-200"/>
</dbReference>
<dbReference type="PDB" id="8K82">
    <property type="method" value="EM"/>
    <property type="resolution" value="3.00 A"/>
    <property type="chains" value="SI=1-200"/>
</dbReference>
<dbReference type="PDB" id="8P4V">
    <property type="method" value="X-ray"/>
    <property type="resolution" value="3.16 A"/>
    <property type="chains" value="J/s8=1-200"/>
</dbReference>
<dbReference type="PDB" id="8P9A">
    <property type="method" value="X-ray"/>
    <property type="resolution" value="2.90 A"/>
    <property type="chains" value="J/s8=1-200"/>
</dbReference>
<dbReference type="PDB" id="8T2X">
    <property type="method" value="EM"/>
    <property type="resolution" value="2.46 A"/>
    <property type="chains" value="BI=1-200"/>
</dbReference>
<dbReference type="PDB" id="8T2Y">
    <property type="method" value="EM"/>
    <property type="resolution" value="2.20 A"/>
    <property type="chains" value="BI=1-200"/>
</dbReference>
<dbReference type="PDB" id="8T2Z">
    <property type="method" value="EM"/>
    <property type="resolution" value="2.40 A"/>
    <property type="chains" value="BI=1-200"/>
</dbReference>
<dbReference type="PDB" id="8T30">
    <property type="method" value="EM"/>
    <property type="resolution" value="2.88 A"/>
    <property type="chains" value="BI=1-200"/>
</dbReference>
<dbReference type="PDB" id="8T3A">
    <property type="method" value="EM"/>
    <property type="resolution" value="2.86 A"/>
    <property type="chains" value="BI=1-200"/>
</dbReference>
<dbReference type="PDB" id="8T3B">
    <property type="method" value="EM"/>
    <property type="resolution" value="3.08 A"/>
    <property type="chains" value="BI=1-200"/>
</dbReference>
<dbReference type="PDB" id="8T3C">
    <property type="method" value="EM"/>
    <property type="resolution" value="3.86 A"/>
    <property type="chains" value="BI=1-200"/>
</dbReference>
<dbReference type="PDB" id="8T3D">
    <property type="method" value="EM"/>
    <property type="resolution" value="2.95 A"/>
    <property type="chains" value="BI=1-200"/>
</dbReference>
<dbReference type="PDB" id="8T3E">
    <property type="method" value="EM"/>
    <property type="resolution" value="3.04 A"/>
    <property type="chains" value="BI=1-200"/>
</dbReference>
<dbReference type="PDB" id="8T3F">
    <property type="method" value="EM"/>
    <property type="resolution" value="3.09 A"/>
    <property type="chains" value="BI=1-200"/>
</dbReference>
<dbReference type="PDB" id="8UT0">
    <property type="method" value="EM"/>
    <property type="resolution" value="3.22 A"/>
    <property type="chains" value="SV=2-199"/>
</dbReference>
<dbReference type="PDB" id="8UTI">
    <property type="method" value="EM"/>
    <property type="resolution" value="3.13 A"/>
    <property type="chains" value="SV=2-199"/>
</dbReference>
<dbReference type="PDB" id="8XU8">
    <property type="method" value="EM"/>
    <property type="resolution" value="3.40 A"/>
    <property type="chains" value="SV=2-199"/>
</dbReference>
<dbReference type="PDB" id="8Y0U">
    <property type="method" value="EM"/>
    <property type="resolution" value="3.59 A"/>
    <property type="chains" value="SI=1-200"/>
</dbReference>
<dbReference type="PDB" id="8YLD">
    <property type="method" value="EM"/>
    <property type="resolution" value="3.90 A"/>
    <property type="chains" value="SV=1-200"/>
</dbReference>
<dbReference type="PDB" id="8YLR">
    <property type="method" value="EM"/>
    <property type="resolution" value="3.90 A"/>
    <property type="chains" value="SV=1-200"/>
</dbReference>
<dbReference type="PDB" id="8Z70">
    <property type="method" value="EM"/>
    <property type="resolution" value="3.20 A"/>
    <property type="chains" value="SV=1-200"/>
</dbReference>
<dbReference type="PDB" id="8Z71">
    <property type="method" value="EM"/>
    <property type="resolution" value="3.60 A"/>
    <property type="chains" value="SV=1-200"/>
</dbReference>
<dbReference type="PDB" id="9F9S">
    <property type="method" value="EM"/>
    <property type="resolution" value="2.90 A"/>
    <property type="chains" value="Ri/Si=1-200"/>
</dbReference>
<dbReference type="PDBsum" id="3J6X"/>
<dbReference type="PDBsum" id="3J6Y"/>
<dbReference type="PDBsum" id="3J77"/>
<dbReference type="PDBsum" id="3J78"/>
<dbReference type="PDBsum" id="4U3M"/>
<dbReference type="PDBsum" id="4U3N"/>
<dbReference type="PDBsum" id="4U3U"/>
<dbReference type="PDBsum" id="4U4N"/>
<dbReference type="PDBsum" id="4U4O"/>
<dbReference type="PDBsum" id="4U4Q"/>
<dbReference type="PDBsum" id="4U4R"/>
<dbReference type="PDBsum" id="4U4U"/>
<dbReference type="PDBsum" id="4U4Y"/>
<dbReference type="PDBsum" id="4U4Z"/>
<dbReference type="PDBsum" id="4U50"/>
<dbReference type="PDBsum" id="4U51"/>
<dbReference type="PDBsum" id="4U52"/>
<dbReference type="PDBsum" id="4U53"/>
<dbReference type="PDBsum" id="4U55"/>
<dbReference type="PDBsum" id="4U56"/>
<dbReference type="PDBsum" id="4U6F"/>
<dbReference type="PDBsum" id="4V88"/>
<dbReference type="PDBsum" id="4V8Y"/>
<dbReference type="PDBsum" id="4V8Z"/>
<dbReference type="PDBsum" id="4V92"/>
<dbReference type="PDBsum" id="5DAT"/>
<dbReference type="PDBsum" id="5DC3"/>
<dbReference type="PDBsum" id="5DGE"/>
<dbReference type="PDBsum" id="5DGF"/>
<dbReference type="PDBsum" id="5DGV"/>
<dbReference type="PDBsum" id="5FCI"/>
<dbReference type="PDBsum" id="5FCJ"/>
<dbReference type="PDBsum" id="5I4L"/>
<dbReference type="PDBsum" id="5JUO"/>
<dbReference type="PDBsum" id="5JUP"/>
<dbReference type="PDBsum" id="5JUS"/>
<dbReference type="PDBsum" id="5JUT"/>
<dbReference type="PDBsum" id="5JUU"/>
<dbReference type="PDBsum" id="5LL6"/>
<dbReference type="PDBsum" id="5LYB"/>
<dbReference type="PDBsum" id="5M1J"/>
<dbReference type="PDBsum" id="5MC6"/>
<dbReference type="PDBsum" id="5MEI"/>
<dbReference type="PDBsum" id="5NDG"/>
<dbReference type="PDBsum" id="5NDV"/>
<dbReference type="PDBsum" id="5NDW"/>
<dbReference type="PDBsum" id="5OBM"/>
<dbReference type="PDBsum" id="5ON6"/>
<dbReference type="PDBsum" id="5TBW"/>
<dbReference type="PDBsum" id="5TGA"/>
<dbReference type="PDBsum" id="5TGM"/>
<dbReference type="PDBsum" id="5TZS"/>
<dbReference type="PDBsum" id="5WLC"/>
<dbReference type="PDBsum" id="5WYJ"/>
<dbReference type="PDBsum" id="5WYK"/>
<dbReference type="PDBsum" id="6EML"/>
<dbReference type="PDBsum" id="6FAI"/>
<dbReference type="PDBsum" id="6GQ1"/>
<dbReference type="PDBsum" id="6GQB"/>
<dbReference type="PDBsum" id="6GQV"/>
<dbReference type="PDBsum" id="6HHQ"/>
<dbReference type="PDBsum" id="6I7O"/>
<dbReference type="PDBsum" id="6KE6"/>
<dbReference type="PDBsum" id="6LQP"/>
<dbReference type="PDBsum" id="6LQQ"/>
<dbReference type="PDBsum" id="6LQR"/>
<dbReference type="PDBsum" id="6LQS"/>
<dbReference type="PDBsum" id="6LQT"/>
<dbReference type="PDBsum" id="6LQU"/>
<dbReference type="PDBsum" id="6LQV"/>
<dbReference type="PDBsum" id="6Q8Y"/>
<dbReference type="PDBsum" id="6RBD"/>
<dbReference type="PDBsum" id="6RBE"/>
<dbReference type="PDBsum" id="6S47"/>
<dbReference type="PDBsum" id="6SNT"/>
<dbReference type="PDBsum" id="6SV4"/>
<dbReference type="PDBsum" id="6T4Q"/>
<dbReference type="PDBsum" id="6T7I"/>
<dbReference type="PDBsum" id="6T7T"/>
<dbReference type="PDBsum" id="6T83"/>
<dbReference type="PDBsum" id="6TNU"/>
<dbReference type="PDBsum" id="6WDR"/>
<dbReference type="PDBsum" id="6WOO"/>
<dbReference type="PDBsum" id="6Y7C"/>
<dbReference type="PDBsum" id="6Z6J"/>
<dbReference type="PDBsum" id="6Z6K"/>
<dbReference type="PDBsum" id="6ZCE"/>
<dbReference type="PDBsum" id="6ZQB"/>
<dbReference type="PDBsum" id="6ZQC"/>
<dbReference type="PDBsum" id="6ZQD"/>
<dbReference type="PDBsum" id="6ZQE"/>
<dbReference type="PDBsum" id="6ZQF"/>
<dbReference type="PDBsum" id="6ZQG"/>
<dbReference type="PDBsum" id="6ZU9"/>
<dbReference type="PDBsum" id="6ZVI"/>
<dbReference type="PDBsum" id="7A1G"/>
<dbReference type="PDBsum" id="7AJT"/>
<dbReference type="PDBsum" id="7AJU"/>
<dbReference type="PDBsum" id="7B7D"/>
<dbReference type="PDBsum" id="7D4I"/>
<dbReference type="PDBsum" id="7D5T"/>
<dbReference type="PDBsum" id="7D63"/>
<dbReference type="PDBsum" id="7MPI"/>
<dbReference type="PDBsum" id="7MPJ"/>
<dbReference type="PDBsum" id="7N8B"/>
<dbReference type="PDBsum" id="7NRC"/>
<dbReference type="PDBsum" id="7NRD"/>
<dbReference type="PDBsum" id="7SUK"/>
<dbReference type="PDBsum" id="7WTL"/>
<dbReference type="PDBsum" id="7WTM"/>
<dbReference type="PDBsum" id="7WTN"/>
<dbReference type="PDBsum" id="7WTO"/>
<dbReference type="PDBsum" id="7WTP"/>
<dbReference type="PDBsum" id="7WTQ"/>
<dbReference type="PDBsum" id="7WTR"/>
<dbReference type="PDBsum" id="7ZPQ"/>
<dbReference type="PDBsum" id="7ZRS"/>
<dbReference type="PDBsum" id="7ZW0"/>
<dbReference type="PDBsum" id="8BN3"/>
<dbReference type="PDBsum" id="8BQX"/>
<dbReference type="PDBsum" id="8C00"/>
<dbReference type="PDBsum" id="8C01"/>
<dbReference type="PDBsum" id="8CAH"/>
<dbReference type="PDBsum" id="8CAS"/>
<dbReference type="PDBsum" id="8CBJ"/>
<dbReference type="PDBsum" id="8CKU"/>
<dbReference type="PDBsum" id="8EUB"/>
<dbReference type="PDBsum" id="8EVP"/>
<dbReference type="PDBsum" id="8EVQ"/>
<dbReference type="PDBsum" id="8EVR"/>
<dbReference type="PDBsum" id="8EVS"/>
<dbReference type="PDBsum" id="8EVT"/>
<dbReference type="PDBsum" id="8EWB"/>
<dbReference type="PDBsum" id="8EWC"/>
<dbReference type="PDBsum" id="8K2D"/>
<dbReference type="PDBsum" id="8K82"/>
<dbReference type="PDBsum" id="8P4V"/>
<dbReference type="PDBsum" id="8P9A"/>
<dbReference type="PDBsum" id="8T2X"/>
<dbReference type="PDBsum" id="8T2Y"/>
<dbReference type="PDBsum" id="8T2Z"/>
<dbReference type="PDBsum" id="8T30"/>
<dbReference type="PDBsum" id="8T3A"/>
<dbReference type="PDBsum" id="8T3B"/>
<dbReference type="PDBsum" id="8T3C"/>
<dbReference type="PDBsum" id="8T3D"/>
<dbReference type="PDBsum" id="8T3E"/>
<dbReference type="PDBsum" id="8T3F"/>
<dbReference type="PDBsum" id="8UT0"/>
<dbReference type="PDBsum" id="8UTI"/>
<dbReference type="PDBsum" id="8XU8"/>
<dbReference type="PDBsum" id="8Y0U"/>
<dbReference type="PDBsum" id="8YLD"/>
<dbReference type="PDBsum" id="8YLR"/>
<dbReference type="PDBsum" id="8Z70"/>
<dbReference type="PDBsum" id="8Z71"/>
<dbReference type="PDBsum" id="9F9S"/>
<dbReference type="EMDB" id="EMD-0047"/>
<dbReference type="EMDB" id="EMD-0048"/>
<dbReference type="EMDB" id="EMD-0049"/>
<dbReference type="EMDB" id="EMD-0949"/>
<dbReference type="EMDB" id="EMD-0950"/>
<dbReference type="EMDB" id="EMD-0951"/>
<dbReference type="EMDB" id="EMD-0952"/>
<dbReference type="EMDB" id="EMD-0953"/>
<dbReference type="EMDB" id="EMD-0954"/>
<dbReference type="EMDB" id="EMD-0955"/>
<dbReference type="EMDB" id="EMD-10098"/>
<dbReference type="EMDB" id="EMD-10262"/>
<dbReference type="EMDB" id="EMD-10315"/>
<dbReference type="EMDB" id="EMD-10377"/>
<dbReference type="EMDB" id="EMD-10396"/>
<dbReference type="EMDB" id="EMD-10398"/>
<dbReference type="EMDB" id="EMD-10713"/>
<dbReference type="EMDB" id="EMD-11096"/>
<dbReference type="EMDB" id="EMD-11097"/>
<dbReference type="EMDB" id="EMD-11160"/>
<dbReference type="EMDB" id="EMD-11358"/>
<dbReference type="EMDB" id="EMD-11359"/>
<dbReference type="EMDB" id="EMD-11360"/>
<dbReference type="EMDB" id="EMD-11361"/>
<dbReference type="EMDB" id="EMD-11362"/>
<dbReference type="EMDB" id="EMD-11363"/>
<dbReference type="EMDB" id="EMD-11439"/>
<dbReference type="EMDB" id="EMD-11457"/>
<dbReference type="EMDB" id="EMD-11608"/>
<dbReference type="EMDB" id="EMD-11807"/>
<dbReference type="EMDB" id="EMD-11808"/>
<dbReference type="EMDB" id="EMD-12081"/>
<dbReference type="EMDB" id="EMD-12534"/>
<dbReference type="EMDB" id="EMD-12535"/>
<dbReference type="EMDB" id="EMD-14921"/>
<dbReference type="EMDB" id="EMD-14990"/>
<dbReference type="EMDB" id="EMD-16191"/>
<dbReference type="EMDB" id="EMD-16347"/>
<dbReference type="EMDB" id="EMD-16349"/>
<dbReference type="EMDB" id="EMD-16525"/>
<dbReference type="EMDB" id="EMD-16533"/>
<dbReference type="EMDB" id="EMD-16541"/>
<dbReference type="EMDB" id="EMD-16702"/>
<dbReference type="EMDB" id="EMD-21644"/>
<dbReference type="EMDB" id="EMD-21859"/>
<dbReference type="EMDB" id="EMD-23934"/>
<dbReference type="EMDB" id="EMD-23935"/>
<dbReference type="EMDB" id="EMD-24235"/>
<dbReference type="EMDB" id="EMD-25441"/>
<dbReference type="EMDB" id="EMD-28610"/>
<dbReference type="EMDB" id="EMD-28632"/>
<dbReference type="EMDB" id="EMD-28633"/>
<dbReference type="EMDB" id="EMD-28634"/>
<dbReference type="EMDB" id="EMD-28635"/>
<dbReference type="EMDB" id="EMD-28636"/>
<dbReference type="EMDB" id="EMD-28642"/>
<dbReference type="EMDB" id="EMD-28643"/>
<dbReference type="EMDB" id="EMD-30574"/>
<dbReference type="EMDB" id="EMD-30585"/>
<dbReference type="EMDB" id="EMD-30588"/>
<dbReference type="EMDB" id="EMD-32790"/>
<dbReference type="EMDB" id="EMD-32791"/>
<dbReference type="EMDB" id="EMD-32792"/>
<dbReference type="EMDB" id="EMD-32793"/>
<dbReference type="EMDB" id="EMD-32794"/>
<dbReference type="EMDB" id="EMD-32795"/>
<dbReference type="EMDB" id="EMD-32796"/>
<dbReference type="EMDB" id="EMD-3461"/>
<dbReference type="EMDB" id="EMD-36839"/>
<dbReference type="EMDB" id="EMD-36945"/>
<dbReference type="EMDB" id="EMD-38660"/>
<dbReference type="EMDB" id="EMD-40990"/>
<dbReference type="EMDB" id="EMD-40991"/>
<dbReference type="EMDB" id="EMD-40992"/>
<dbReference type="EMDB" id="EMD-40993"/>
<dbReference type="EMDB" id="EMD-40997"/>
<dbReference type="EMDB" id="EMD-40998"/>
<dbReference type="EMDB" id="EMD-40999"/>
<dbReference type="EMDB" id="EMD-41000"/>
<dbReference type="EMDB" id="EMD-41001"/>
<dbReference type="EMDB" id="EMD-41002"/>
<dbReference type="EMDB" id="EMD-4140"/>
<dbReference type="EMDB" id="EMD-4214"/>
<dbReference type="EMDB" id="EMD-4427"/>
<dbReference type="EMDB" id="EMD-4474"/>
<dbReference type="EMDB" id="EMD-4792"/>
<dbReference type="EMDB" id="EMD-4793"/>
<dbReference type="EMDB" id="EMD-50259"/>
<dbReference type="EMDB" id="EMD-6695"/>
<dbReference type="EMDB" id="EMD-6696"/>
<dbReference type="EMDB" id="EMD-8473"/>
<dbReference type="EMDB" id="EMD-8859"/>
<dbReference type="EMDB" id="EMD-9964"/>
<dbReference type="SMR" id="P0CX39"/>
<dbReference type="BioGRID" id="32629">
    <property type="interactions" value="970"/>
</dbReference>
<dbReference type="BioGRID" id="36848">
    <property type="interactions" value="120"/>
</dbReference>
<dbReference type="ComplexPortal" id="CPX-1599">
    <property type="entry name" value="40S cytosolic small ribosomal subunit"/>
</dbReference>
<dbReference type="FunCoup" id="P0CX39">
    <property type="interactions" value="1380"/>
</dbReference>
<dbReference type="IntAct" id="P0CX39">
    <property type="interactions" value="44"/>
</dbReference>
<dbReference type="MINT" id="P0CX39"/>
<dbReference type="STRING" id="4932.YBL072C"/>
<dbReference type="CarbonylDB" id="P0CX39"/>
<dbReference type="iPTMnet" id="P0CX39"/>
<dbReference type="PaxDb" id="4932-YBL072C"/>
<dbReference type="PeptideAtlas" id="P0CX39"/>
<dbReference type="EnsemblFungi" id="YBL072C_mRNA">
    <property type="protein sequence ID" value="YBL072C"/>
    <property type="gene ID" value="YBL072C"/>
</dbReference>
<dbReference type="EnsemblFungi" id="YER102W_mRNA">
    <property type="protein sequence ID" value="YER102W"/>
    <property type="gene ID" value="YER102W"/>
</dbReference>
<dbReference type="GeneID" id="852206"/>
<dbReference type="KEGG" id="sce:YBL072C"/>
<dbReference type="KEGG" id="sce:YER102W"/>
<dbReference type="AGR" id="SGD:S000000168"/>
<dbReference type="SGD" id="S000000168">
    <property type="gene designation" value="RPS8A"/>
</dbReference>
<dbReference type="VEuPathDB" id="FungiDB:YBL072C"/>
<dbReference type="VEuPathDB" id="FungiDB:YER102W"/>
<dbReference type="eggNOG" id="KOG3283">
    <property type="taxonomic scope" value="Eukaryota"/>
</dbReference>
<dbReference type="HOGENOM" id="CLU_080597_1_1_1"/>
<dbReference type="InParanoid" id="P0CX39"/>
<dbReference type="OMA" id="QRPHYRK"/>
<dbReference type="OrthoDB" id="1703270at2759"/>
<dbReference type="BioCyc" id="YEAST:G3O-28965-MONOMER"/>
<dbReference type="Reactome" id="R-SCE-156827">
    <property type="pathway name" value="L13a-mediated translational silencing of Ceruloplasmin expression"/>
</dbReference>
<dbReference type="Reactome" id="R-SCE-1799339">
    <property type="pathway name" value="SRP-dependent cotranslational protein targeting to membrane"/>
</dbReference>
<dbReference type="Reactome" id="R-SCE-72649">
    <property type="pathway name" value="Translation initiation complex formation"/>
</dbReference>
<dbReference type="Reactome" id="R-SCE-72689">
    <property type="pathway name" value="Formation of a pool of free 40S subunits"/>
</dbReference>
<dbReference type="Reactome" id="R-SCE-72695">
    <property type="pathway name" value="Formation of the ternary complex, and subsequently, the 43S complex"/>
</dbReference>
<dbReference type="Reactome" id="R-SCE-72702">
    <property type="pathway name" value="Ribosomal scanning and start codon recognition"/>
</dbReference>
<dbReference type="Reactome" id="R-SCE-72706">
    <property type="pathway name" value="GTP hydrolysis and joining of the 60S ribosomal subunit"/>
</dbReference>
<dbReference type="Reactome" id="R-SCE-975956">
    <property type="pathway name" value="Nonsense Mediated Decay (NMD) independent of the Exon Junction Complex (EJC)"/>
</dbReference>
<dbReference type="Reactome" id="R-SCE-975957">
    <property type="pathway name" value="Nonsense Mediated Decay (NMD) enhanced by the Exon Junction Complex (EJC)"/>
</dbReference>
<dbReference type="BioGRID-ORCS" id="852206">
    <property type="hits" value="3 hits in 10 CRISPR screens"/>
</dbReference>
<dbReference type="BioGRID-ORCS" id="856839">
    <property type="hits" value="2 hits in 10 CRISPR screens"/>
</dbReference>
<dbReference type="ChiTaRS" id="RPS8A">
    <property type="organism name" value="yeast"/>
</dbReference>
<dbReference type="PRO" id="PR:P0CX39"/>
<dbReference type="Proteomes" id="UP000002311">
    <property type="component" value="Chromosome II"/>
</dbReference>
<dbReference type="RNAct" id="P0CX39">
    <property type="molecule type" value="protein"/>
</dbReference>
<dbReference type="ExpressionAtlas" id="P0CX39">
    <property type="expression patterns" value="baseline and differential"/>
</dbReference>
<dbReference type="GO" id="GO:0030686">
    <property type="term" value="C:90S preribosome"/>
    <property type="evidence" value="ECO:0007005"/>
    <property type="project" value="SGD"/>
</dbReference>
<dbReference type="GO" id="GO:0005829">
    <property type="term" value="C:cytosol"/>
    <property type="evidence" value="ECO:0000304"/>
    <property type="project" value="Reactome"/>
</dbReference>
<dbReference type="GO" id="GO:0022627">
    <property type="term" value="C:cytosolic small ribosomal subunit"/>
    <property type="evidence" value="ECO:0000314"/>
    <property type="project" value="SGD"/>
</dbReference>
<dbReference type="GO" id="GO:0003735">
    <property type="term" value="F:structural constituent of ribosome"/>
    <property type="evidence" value="ECO:0000314"/>
    <property type="project" value="SGD"/>
</dbReference>
<dbReference type="GO" id="GO:0000462">
    <property type="term" value="P:maturation of SSU-rRNA from tricistronic rRNA transcript (SSU-rRNA, 5.8S rRNA, LSU-rRNA)"/>
    <property type="evidence" value="ECO:0000316"/>
    <property type="project" value="SGD"/>
</dbReference>
<dbReference type="GO" id="GO:0006412">
    <property type="term" value="P:translation"/>
    <property type="evidence" value="ECO:0007669"/>
    <property type="project" value="InterPro"/>
</dbReference>
<dbReference type="CDD" id="cd11380">
    <property type="entry name" value="Ribosomal_S8e_like"/>
    <property type="match status" value="1"/>
</dbReference>
<dbReference type="FunFam" id="1.10.168.20:FF:000001">
    <property type="entry name" value="40S ribosomal protein S8"/>
    <property type="match status" value="1"/>
</dbReference>
<dbReference type="Gene3D" id="3.10.290.70">
    <property type="match status" value="1"/>
</dbReference>
<dbReference type="Gene3D" id="1.10.168.20">
    <property type="entry name" value="Ribosomal protein S8e, subdomain"/>
    <property type="match status" value="1"/>
</dbReference>
<dbReference type="InterPro" id="IPR001047">
    <property type="entry name" value="Ribosomal_eS8"/>
</dbReference>
<dbReference type="InterPro" id="IPR018283">
    <property type="entry name" value="Ribosomal_eS8_CS"/>
</dbReference>
<dbReference type="InterPro" id="IPR042563">
    <property type="entry name" value="Ribosomal_protein_eS8_euk"/>
</dbReference>
<dbReference type="InterPro" id="IPR022309">
    <property type="entry name" value="Ribosomal_Se8/biogenesis_NSA2"/>
</dbReference>
<dbReference type="NCBIfam" id="TIGR00307">
    <property type="entry name" value="eS8"/>
    <property type="match status" value="1"/>
</dbReference>
<dbReference type="PANTHER" id="PTHR10394">
    <property type="entry name" value="40S RIBOSOMAL PROTEIN S8"/>
    <property type="match status" value="1"/>
</dbReference>
<dbReference type="Pfam" id="PF01201">
    <property type="entry name" value="Ribosomal_S8e"/>
    <property type="match status" value="1"/>
</dbReference>
<dbReference type="PROSITE" id="PS01193">
    <property type="entry name" value="RIBOSOMAL_S8E"/>
    <property type="match status" value="1"/>
</dbReference>
<sequence length="200" mass="22490">MGISRDSRHKRSATGAKRAQFRKKRKFELGRQPANTKIGAKRIHSVRTRGGNKKYRALRIETGNFSWASEGISKKTRIAGVVYHPSNNELVRTNTLTKAAIVQIDATPFRQWFEAHYGQTLGKKKNVKEEETVAKSKNAERKWAARAASAKIESSVESQFSAGRLYACISSRPGQSGRCDGYILEGEELAFYLRRLTAKK</sequence>
<proteinExistence type="evidence at protein level"/>
<keyword id="KW-0002">3D-structure</keyword>
<keyword id="KW-0963">Cytoplasm</keyword>
<keyword id="KW-0903">Direct protein sequencing</keyword>
<keyword id="KW-0597">Phosphoprotein</keyword>
<keyword id="KW-1185">Reference proteome</keyword>
<keyword id="KW-0687">Ribonucleoprotein</keyword>
<keyword id="KW-0689">Ribosomal protein</keyword>
<reference key="1">
    <citation type="journal article" date="1994" name="Yeast">
        <title>The two genes encoding yeast ribosomal protein S8 reside on different chromosomes, and are closely linked to the hsp70 stress protein genes SSA3 and SSA4.</title>
        <authorList>
            <person name="Logghe M."/>
            <person name="Molemans F."/>
            <person name="Fiers W."/>
            <person name="Contreras R."/>
        </authorList>
    </citation>
    <scope>NUCLEOTIDE SEQUENCE [GENOMIC DNA]</scope>
    <source>
        <strain>ATCC 204508 / S288c</strain>
    </source>
</reference>
<reference key="2">
    <citation type="journal article" date="1994" name="EMBO J.">
        <title>Complete DNA sequence of yeast chromosome II.</title>
        <authorList>
            <person name="Feldmann H."/>
            <person name="Aigle M."/>
            <person name="Aljinovic G."/>
            <person name="Andre B."/>
            <person name="Baclet M.C."/>
            <person name="Barthe C."/>
            <person name="Baur A."/>
            <person name="Becam A.-M."/>
            <person name="Biteau N."/>
            <person name="Boles E."/>
            <person name="Brandt T."/>
            <person name="Brendel M."/>
            <person name="Brueckner M."/>
            <person name="Bussereau F."/>
            <person name="Christiansen C."/>
            <person name="Contreras R."/>
            <person name="Crouzet M."/>
            <person name="Cziepluch C."/>
            <person name="Demolis N."/>
            <person name="Delaveau T."/>
            <person name="Doignon F."/>
            <person name="Domdey H."/>
            <person name="Duesterhus S."/>
            <person name="Dubois E."/>
            <person name="Dujon B."/>
            <person name="El Bakkoury M."/>
            <person name="Entian K.-D."/>
            <person name="Feuermann M."/>
            <person name="Fiers W."/>
            <person name="Fobo G.M."/>
            <person name="Fritz C."/>
            <person name="Gassenhuber J."/>
            <person name="Glansdorff N."/>
            <person name="Goffeau A."/>
            <person name="Grivell L.A."/>
            <person name="de Haan M."/>
            <person name="Hein C."/>
            <person name="Herbert C.J."/>
            <person name="Hollenberg C.P."/>
            <person name="Holmstroem K."/>
            <person name="Jacq C."/>
            <person name="Jacquet M."/>
            <person name="Jauniaux J.-C."/>
            <person name="Jonniaux J.-L."/>
            <person name="Kallesoee T."/>
            <person name="Kiesau P."/>
            <person name="Kirchrath L."/>
            <person name="Koetter P."/>
            <person name="Korol S."/>
            <person name="Liebl S."/>
            <person name="Logghe M."/>
            <person name="Lohan A.J.E."/>
            <person name="Louis E.J."/>
            <person name="Li Z.Y."/>
            <person name="Maat M.J."/>
            <person name="Mallet L."/>
            <person name="Mannhaupt G."/>
            <person name="Messenguy F."/>
            <person name="Miosga T."/>
            <person name="Molemans F."/>
            <person name="Mueller S."/>
            <person name="Nasr F."/>
            <person name="Obermaier B."/>
            <person name="Perea J."/>
            <person name="Pierard A."/>
            <person name="Piravandi E."/>
            <person name="Pohl F.M."/>
            <person name="Pohl T.M."/>
            <person name="Potier S."/>
            <person name="Proft M."/>
            <person name="Purnelle B."/>
            <person name="Ramezani Rad M."/>
            <person name="Rieger M."/>
            <person name="Rose M."/>
            <person name="Schaaff-Gerstenschlaeger I."/>
            <person name="Scherens B."/>
            <person name="Schwarzlose C."/>
            <person name="Skala J."/>
            <person name="Slonimski P.P."/>
            <person name="Smits P.H.M."/>
            <person name="Souciet J.-L."/>
            <person name="Steensma H.Y."/>
            <person name="Stucka R."/>
            <person name="Urrestarazu L.A."/>
            <person name="van der Aart Q.J.M."/>
            <person name="Van Dyck L."/>
            <person name="Vassarotti A."/>
            <person name="Vetter I."/>
            <person name="Vierendeels F."/>
            <person name="Vissers S."/>
            <person name="Wagner G."/>
            <person name="de Wergifosse P."/>
            <person name="Wolfe K.H."/>
            <person name="Zagulski M."/>
            <person name="Zimmermann F.K."/>
            <person name="Mewes H.-W."/>
            <person name="Kleine K."/>
        </authorList>
    </citation>
    <scope>NUCLEOTIDE SEQUENCE [LARGE SCALE GENOMIC DNA]</scope>
    <source>
        <strain>ATCC 204508 / S288c</strain>
    </source>
</reference>
<reference key="3">
    <citation type="journal article" date="2014" name="G3 (Bethesda)">
        <title>The reference genome sequence of Saccharomyces cerevisiae: Then and now.</title>
        <authorList>
            <person name="Engel S.R."/>
            <person name="Dietrich F.S."/>
            <person name="Fisk D.G."/>
            <person name="Binkley G."/>
            <person name="Balakrishnan R."/>
            <person name="Costanzo M.C."/>
            <person name="Dwight S.S."/>
            <person name="Hitz B.C."/>
            <person name="Karra K."/>
            <person name="Nash R.S."/>
            <person name="Weng S."/>
            <person name="Wong E.D."/>
            <person name="Lloyd P."/>
            <person name="Skrzypek M.S."/>
            <person name="Miyasato S.R."/>
            <person name="Simison M."/>
            <person name="Cherry J.M."/>
        </authorList>
    </citation>
    <scope>GENOME REANNOTATION</scope>
    <source>
        <strain>ATCC 204508 / S288c</strain>
    </source>
</reference>
<reference key="4">
    <citation type="journal article" date="2007" name="Proc. Natl. Acad. Sci. U.S.A.">
        <title>High-density yeast-tiling array reveals previously undiscovered introns and extensive regulation of meiotic splicing.</title>
        <authorList>
            <person name="Juneau K."/>
            <person name="Palm C."/>
            <person name="Miranda M."/>
            <person name="Davis R.W."/>
        </authorList>
    </citation>
    <scope>NUCLEOTIDE SEQUENCE [MRNA] OF 1-102</scope>
    <source>
        <strain>ATCC 201390 / BY4743</strain>
    </source>
</reference>
<reference key="5">
    <citation type="journal article" date="1984" name="Mol. Gen. Genet.">
        <title>Yeast ribosomal proteins. VIII. Isolation of two proteins and sequence characterization of twenty-four proteins from cytoplasmic ribosomes.</title>
        <authorList>
            <person name="Otaka E."/>
            <person name="Higo K."/>
            <person name="Itoh T."/>
        </authorList>
    </citation>
    <scope>PARTIAL PROTEIN SEQUENCE OF 2-51</scope>
    <scope>CLEAVAGE OF INITIATOR METHIONINE</scope>
</reference>
<reference key="6">
    <citation type="journal article" date="1998" name="Yeast">
        <title>The list of cytoplasmic ribosomal proteins of Saccharomyces cerevisiae.</title>
        <authorList>
            <person name="Planta R.J."/>
            <person name="Mager W.H."/>
        </authorList>
    </citation>
    <scope>NOMENCLATURE</scope>
    <scope>SUBUNIT</scope>
</reference>
<reference key="7">
    <citation type="journal article" date="1999" name="J. Biol. Chem.">
        <title>The action of N-terminal acetyltransferases on yeast ribosomal proteins.</title>
        <authorList>
            <person name="Arnold R.J."/>
            <person name="Polevoda B."/>
            <person name="Reilly J.P."/>
            <person name="Sherman F."/>
        </authorList>
    </citation>
    <scope>CLEAVAGE OF INITIATOR METHIONINE</scope>
</reference>
<reference key="8">
    <citation type="journal article" date="2003" name="Nature">
        <title>Global analysis of protein localization in budding yeast.</title>
        <authorList>
            <person name="Huh W.-K."/>
            <person name="Falvo J.V."/>
            <person name="Gerke L.C."/>
            <person name="Carroll A.S."/>
            <person name="Howson R.W."/>
            <person name="Weissman J.S."/>
            <person name="O'Shea E.K."/>
        </authorList>
    </citation>
    <scope>SUBCELLULAR LOCATION [LARGE SCALE ANALYSIS]</scope>
</reference>
<reference key="9">
    <citation type="journal article" date="2003" name="Nature">
        <title>Global analysis of protein expression in yeast.</title>
        <authorList>
            <person name="Ghaemmaghami S."/>
            <person name="Huh W.-K."/>
            <person name="Bower K."/>
            <person name="Howson R.W."/>
            <person name="Belle A."/>
            <person name="Dephoure N."/>
            <person name="O'Shea E.K."/>
            <person name="Weissman J.S."/>
        </authorList>
    </citation>
    <scope>LEVEL OF PROTEIN EXPRESSION [LARGE SCALE ANALYSIS]</scope>
</reference>
<reference key="10">
    <citation type="journal article" date="2007" name="Proc. Natl. Acad. Sci. U.S.A.">
        <title>Analysis of phosphorylation sites on proteins from Saccharomyces cerevisiae by electron transfer dissociation (ETD) mass spectrometry.</title>
        <authorList>
            <person name="Chi A."/>
            <person name="Huttenhower C."/>
            <person name="Geer L.Y."/>
            <person name="Coon J.J."/>
            <person name="Syka J.E.P."/>
            <person name="Bai D.L."/>
            <person name="Shabanowitz J."/>
            <person name="Burke D.J."/>
            <person name="Troyanskaya O.G."/>
            <person name="Hunt D.F."/>
        </authorList>
    </citation>
    <scope>PHOSPHORYLATION [LARGE SCALE ANALYSIS] AT SER-66; SER-69 AND SER-73</scope>
    <scope>IDENTIFICATION BY MASS SPECTROMETRY [LARGE SCALE ANALYSIS]</scope>
</reference>
<reference key="11">
    <citation type="journal article" date="2008" name="Mol. Cell. Proteomics">
        <title>A multidimensional chromatography technology for in-depth phosphoproteome analysis.</title>
        <authorList>
            <person name="Albuquerque C.P."/>
            <person name="Smolka M.B."/>
            <person name="Payne S.H."/>
            <person name="Bafna V."/>
            <person name="Eng J."/>
            <person name="Zhou H."/>
        </authorList>
    </citation>
    <scope>PHOSPHORYLATION [LARGE SCALE ANALYSIS] AT THR-107 AND SER-158</scope>
    <scope>IDENTIFICATION BY MASS SPECTROMETRY [LARGE SCALE ANALYSIS]</scope>
</reference>
<reference key="12">
    <citation type="journal article" date="2009" name="Science">
        <title>Global analysis of Cdk1 substrate phosphorylation sites provides insights into evolution.</title>
        <authorList>
            <person name="Holt L.J."/>
            <person name="Tuch B.B."/>
            <person name="Villen J."/>
            <person name="Johnson A.D."/>
            <person name="Gygi S.P."/>
            <person name="Morgan D.O."/>
        </authorList>
    </citation>
    <scope>PHOSPHORYLATION [LARGE SCALE ANALYSIS] AT THR-62; SER-69; SER-73; SER-86; SER-154; SER-155 AND SER-161</scope>
    <scope>IDENTIFICATION BY MASS SPECTROMETRY [LARGE SCALE ANALYSIS]</scope>
</reference>
<reference key="13">
    <citation type="journal article" date="2014" name="Curr. Opin. Struct. Biol.">
        <title>A new system for naming ribosomal proteins.</title>
        <authorList>
            <person name="Ban N."/>
            <person name="Beckmann R."/>
            <person name="Cate J.H.D."/>
            <person name="Dinman J.D."/>
            <person name="Dragon F."/>
            <person name="Ellis S.R."/>
            <person name="Lafontaine D.L.J."/>
            <person name="Lindahl L."/>
            <person name="Liljas A."/>
            <person name="Lipton J.M."/>
            <person name="McAlear M.A."/>
            <person name="Moore P.B."/>
            <person name="Noller H.F."/>
            <person name="Ortega J."/>
            <person name="Panse V.G."/>
            <person name="Ramakrishnan V."/>
            <person name="Spahn C.M.T."/>
            <person name="Steitz T.A."/>
            <person name="Tchorzewski M."/>
            <person name="Tollervey D."/>
            <person name="Warren A.J."/>
            <person name="Williamson J.R."/>
            <person name="Wilson D."/>
            <person name="Yonath A."/>
            <person name="Yusupov M."/>
        </authorList>
    </citation>
    <scope>NOMENCLATURE</scope>
</reference>
<reference key="14">
    <citation type="journal article" date="2011" name="Science">
        <title>The structure of the eukaryotic ribosome at 3.0 A resolution.</title>
        <authorList>
            <person name="Ben-Shem A."/>
            <person name="Garreau de Loubresse N."/>
            <person name="Melnikov S."/>
            <person name="Jenner L."/>
            <person name="Yusupova G."/>
            <person name="Yusupov M."/>
        </authorList>
    </citation>
    <scope>X-RAY CRYSTALLOGRAPHY (3.00 ANGSTROMS) OF 80S RIBOSOME</scope>
    <scope>SUBUNIT</scope>
    <scope>SUBCELLULAR LOCATION</scope>
</reference>
<organism>
    <name type="scientific">Saccharomyces cerevisiae (strain ATCC 204508 / S288c)</name>
    <name type="common">Baker's yeast</name>
    <dbReference type="NCBI Taxonomy" id="559292"/>
    <lineage>
        <taxon>Eukaryota</taxon>
        <taxon>Fungi</taxon>
        <taxon>Dikarya</taxon>
        <taxon>Ascomycota</taxon>
        <taxon>Saccharomycotina</taxon>
        <taxon>Saccharomycetes</taxon>
        <taxon>Saccharomycetales</taxon>
        <taxon>Saccharomycetaceae</taxon>
        <taxon>Saccharomyces</taxon>
    </lineage>
</organism>
<gene>
    <name evidence="8" type="primary">RPS8A</name>
    <name type="synonym">RPS14A</name>
    <name type="ordered locus">YBL072C</name>
    <name type="ORF">YBL06.05</name>
    <name type="ORF">YBL0613</name>
</gene>
<protein>
    <recommendedName>
        <fullName evidence="7">Small ribosomal subunit protein eS8A</fullName>
    </recommendedName>
    <alternativeName>
        <fullName evidence="8">40S ribosomal protein S8-A</fullName>
    </alternativeName>
    <alternativeName>
        <fullName>RP19</fullName>
    </alternativeName>
    <alternativeName>
        <fullName>S14</fullName>
    </alternativeName>
    <alternativeName>
        <fullName>YS9</fullName>
    </alternativeName>
</protein>
<name>RS8A_YEAST</name>
<evidence type="ECO:0000256" key="1">
    <source>
        <dbReference type="SAM" id="MobiDB-lite"/>
    </source>
</evidence>
<evidence type="ECO:0000269" key="2">
    <source>
    </source>
</evidence>
<evidence type="ECO:0000269" key="3">
    <source>
    </source>
</evidence>
<evidence type="ECO:0000269" key="4">
    <source>
    </source>
</evidence>
<evidence type="ECO:0000269" key="5">
    <source>
    </source>
</evidence>
<evidence type="ECO:0000269" key="6">
    <source>
    </source>
</evidence>
<evidence type="ECO:0000303" key="7">
    <source>
    </source>
</evidence>
<evidence type="ECO:0000303" key="8">
    <source>
    </source>
</evidence>
<evidence type="ECO:0000305" key="9"/>
<evidence type="ECO:0000305" key="10">
    <source>
    </source>
</evidence>
<evidence type="ECO:0000305" key="11">
    <source>
    </source>
</evidence>
<evidence type="ECO:0007744" key="12">
    <source>
    </source>
</evidence>
<evidence type="ECO:0007744" key="13">
    <source>
    </source>
</evidence>
<evidence type="ECO:0007744" key="14">
    <source>
    </source>
</evidence>
<evidence type="ECO:0007829" key="15">
    <source>
        <dbReference type="PDB" id="8C01"/>
    </source>
</evidence>
<comment type="function">
    <text evidence="10">Component of the ribosome, a large ribonucleoprotein complex responsible for the synthesis of proteins in the cell. The small ribosomal subunit (SSU) binds messenger RNAs (mRNAs) and translates the encoded message by selecting cognate aminoacyl-transfer RNA (tRNA) molecules. The large subunit (LSU) contains the ribosomal catalytic site termed the peptidyl transferase center (PTC), which catalyzes the formation of peptide bonds, thereby polymerizing the amino acids delivered by tRNAs into a polypeptide chain. The nascent polypeptides leave the ribosome through a tunnel in the LSU and interact with protein factors that function in enzymatic processing, targeting, and the membrane insertion of nascent chains at the exit of the ribosomal tunnel.</text>
</comment>
<comment type="subunit">
    <text evidence="6 11">Component of the small ribosomal subunit (SSU). Mature yeast ribosomes consist of a small (40S) and a large (60S) subunit. The 40S small subunit contains 1 molecule of ribosomal RNA (18S rRNA) and 33 different proteins (encoded by 57 genes). The large 60S subunit contains 3 rRNA molecules (25S, 5.8S and 5S rRNA) and 46 different proteins (encoded by 81 genes) (PubMed:22096102, PubMed:9559554).</text>
</comment>
<comment type="subcellular location">
    <subcellularLocation>
        <location evidence="3 6">Cytoplasm</location>
    </subcellularLocation>
</comment>
<comment type="miscellaneous">
    <text evidence="4">Present with 15900 molecules/cell in log phase SD medium.</text>
</comment>
<comment type="miscellaneous">
    <text evidence="9">There are 2 genes for eS8 in yeast.</text>
</comment>
<comment type="similarity">
    <text evidence="9">Belongs to the eukaryotic ribosomal protein eS8 family.</text>
</comment>
<feature type="initiator methionine" description="Removed" evidence="2 5">
    <location>
        <position position="1"/>
    </location>
</feature>
<feature type="chain" id="PRO_0000122258" description="Small ribosomal subunit protein eS8A">
    <location>
        <begin position="2"/>
        <end position="200"/>
    </location>
</feature>
<feature type="region of interest" description="Disordered" evidence="1">
    <location>
        <begin position="1"/>
        <end position="31"/>
    </location>
</feature>
<feature type="modified residue" description="Phosphothreonine" evidence="14">
    <location>
        <position position="62"/>
    </location>
</feature>
<feature type="modified residue" description="Phosphoserine" evidence="12">
    <location>
        <position position="66"/>
    </location>
</feature>
<feature type="modified residue" description="Phosphoserine" evidence="12 14">
    <location>
        <position position="69"/>
    </location>
</feature>
<feature type="modified residue" description="Phosphoserine" evidence="12 14">
    <location>
        <position position="73"/>
    </location>
</feature>
<feature type="modified residue" description="Phosphoserine" evidence="14">
    <location>
        <position position="86"/>
    </location>
</feature>
<feature type="modified residue" description="Phosphothreonine" evidence="13">
    <location>
        <position position="107"/>
    </location>
</feature>
<feature type="modified residue" description="Phosphoserine" evidence="14">
    <location>
        <position position="154"/>
    </location>
</feature>
<feature type="modified residue" description="Phosphoserine" evidence="14">
    <location>
        <position position="155"/>
    </location>
</feature>
<feature type="modified residue" description="Phosphoserine" evidence="13">
    <location>
        <position position="158"/>
    </location>
</feature>
<feature type="modified residue" description="Phosphoserine" evidence="14">
    <location>
        <position position="161"/>
    </location>
</feature>
<feature type="sequence conflict" description="In Ref. 5; AA sequence." evidence="9" ref="5">
    <original>R</original>
    <variation>K</variation>
    <location>
        <position position="49"/>
    </location>
</feature>
<feature type="sequence conflict" description="In Ref. 4; ABM97467." evidence="9" ref="4">
    <original>IV</original>
    <variation>MS</variation>
    <location>
        <begin position="101"/>
        <end position="102"/>
    </location>
</feature>
<feature type="helix" evidence="15">
    <location>
        <begin position="26"/>
        <end position="28"/>
    </location>
</feature>
<feature type="strand" evidence="15">
    <location>
        <begin position="37"/>
        <end position="40"/>
    </location>
</feature>
<feature type="strand" evidence="15">
    <location>
        <begin position="42"/>
        <end position="48"/>
    </location>
</feature>
<feature type="helix" evidence="15">
    <location>
        <begin position="49"/>
        <end position="51"/>
    </location>
</feature>
<feature type="strand" evidence="15">
    <location>
        <begin position="52"/>
        <end position="60"/>
    </location>
</feature>
<feature type="strand" evidence="15">
    <location>
        <begin position="62"/>
        <end position="66"/>
    </location>
</feature>
<feature type="turn" evidence="15">
    <location>
        <begin position="68"/>
        <end position="70"/>
    </location>
</feature>
<feature type="strand" evidence="15">
    <location>
        <begin position="73"/>
        <end position="83"/>
    </location>
</feature>
<feature type="helix" evidence="15">
    <location>
        <begin position="89"/>
        <end position="93"/>
    </location>
</feature>
<feature type="strand" evidence="15">
    <location>
        <begin position="101"/>
        <end position="105"/>
    </location>
</feature>
<feature type="helix" evidence="15">
    <location>
        <begin position="107"/>
        <end position="117"/>
    </location>
</feature>
<feature type="helix" evidence="15">
    <location>
        <begin position="137"/>
        <end position="146"/>
    </location>
</feature>
<feature type="helix" evidence="15">
    <location>
        <begin position="147"/>
        <end position="149"/>
    </location>
</feature>
<feature type="helix" evidence="15">
    <location>
        <begin position="154"/>
        <end position="157"/>
    </location>
</feature>
<feature type="helix" evidence="15">
    <location>
        <begin position="158"/>
        <end position="161"/>
    </location>
</feature>
<feature type="strand" evidence="15">
    <location>
        <begin position="163"/>
        <end position="169"/>
    </location>
</feature>
<feature type="helix" evidence="15">
    <location>
        <begin position="173"/>
        <end position="176"/>
    </location>
</feature>
<feature type="strand" evidence="15">
    <location>
        <begin position="180"/>
        <end position="183"/>
    </location>
</feature>
<feature type="helix" evidence="15">
    <location>
        <begin position="187"/>
        <end position="197"/>
    </location>
</feature>